<feature type="chain" id="PRO_0000127284" description="Musculin">
    <location>
        <begin position="1"/>
        <end position="201"/>
    </location>
</feature>
<feature type="domain" description="bHLH" evidence="2">
    <location>
        <begin position="102"/>
        <end position="154"/>
    </location>
</feature>
<feature type="region of interest" description="Disordered" evidence="3">
    <location>
        <begin position="1"/>
        <end position="108"/>
    </location>
</feature>
<feature type="region of interest" description="Disordered" evidence="3">
    <location>
        <begin position="182"/>
        <end position="201"/>
    </location>
</feature>
<feature type="short sequence motif" description="Nuclear localization signal" evidence="1">
    <location>
        <begin position="66"/>
        <end position="71"/>
    </location>
</feature>
<feature type="compositionally biased region" description="Acidic residues" evidence="3">
    <location>
        <begin position="46"/>
        <end position="56"/>
    </location>
</feature>
<feature type="compositionally biased region" description="Gly residues" evidence="3">
    <location>
        <begin position="74"/>
        <end position="86"/>
    </location>
</feature>
<feature type="mutagenesis site" description="Loss of DNA-binding." evidence="5">
    <original>RER</original>
    <variation>LEG</variation>
    <location>
        <begin position="110"/>
        <end position="112"/>
    </location>
</feature>
<gene>
    <name type="primary">Msc</name>
    <name type="synonym">Myor</name>
</gene>
<keyword id="KW-0238">DNA-binding</keyword>
<keyword id="KW-0539">Nucleus</keyword>
<keyword id="KW-1185">Reference proteome</keyword>
<keyword id="KW-0678">Repressor</keyword>
<keyword id="KW-0804">Transcription</keyword>
<keyword id="KW-0805">Transcription regulation</keyword>
<comment type="function">
    <text>Transcription repressor that blocks myogenesis and activation of E-box dependent muscle genes.</text>
</comment>
<comment type="subunit">
    <text>Efficient DNA binding requires dimerization with another bHLH protein. Binds DNA as a homodimer or a heterodimer. Forms a heterodimer with TCF3.</text>
</comment>
<comment type="subcellular location">
    <subcellularLocation>
        <location>Nucleus</location>
    </subcellularLocation>
</comment>
<comment type="developmental stage">
    <text evidence="4">Expression in embryos is largely restricted to embryonic skeletal muscle lineage. First detected at 9.5 dpc in cells within the first and second branchial arches. At 10.5 dpc, expression was also observed in the myotomal compartment of rostral somites and by 11.5 dpc in myotomes along the whole anterio-posterior axis, as well as in cells within the developing forelimbs and hindlimbs. At 12.5-14.5 dpc, expression was confined to the skeletal muscle lineage (head, neck, trunk, limbs and diaphragm but not cardiac and smooth muscle). At 15 dpc, a peak expression was seen in neonatal limbs.</text>
</comment>
<protein>
    <recommendedName>
        <fullName>Musculin</fullName>
    </recommendedName>
    <alternativeName>
        <fullName>Myogenic repressor</fullName>
    </alternativeName>
</protein>
<sequence length="201" mass="21538">MSTGSVSDPEDSEMRGLQRVYPAPASKRPPLLRMERGYGSPSDISSAEEEDGEEEPGSLGAAGGCKRKRLRGADAGGAGGRAGGAGKKPLPPKGSAAECKQSQRNAANARERARMRVLSKAFSRLKTSLPWVPPDTKLSKLDTLRLASSYIAHLRQLLQEDRYEDSYVHPVNLTWPFVVSGRPDSDSKDVSAANRLCGTSA</sequence>
<accession>O88940</accession>
<accession>Q3ZAZ1</accession>
<evidence type="ECO:0000255" key="1"/>
<evidence type="ECO:0000255" key="2">
    <source>
        <dbReference type="PROSITE-ProRule" id="PRU00981"/>
    </source>
</evidence>
<evidence type="ECO:0000256" key="3">
    <source>
        <dbReference type="SAM" id="MobiDB-lite"/>
    </source>
</evidence>
<evidence type="ECO:0000269" key="4">
    <source>
    </source>
</evidence>
<evidence type="ECO:0000269" key="5">
    <source>
    </source>
</evidence>
<proteinExistence type="evidence at protein level"/>
<reference key="1">
    <citation type="journal article" date="1998" name="Mech. Dev.">
        <title>Musculin: a murine basic helix-loop-helix transcription factor gene expressed in embryonic skeletal muscle.</title>
        <authorList>
            <person name="Robb L."/>
            <person name="Hartley L."/>
            <person name="Wang C.-C."/>
            <person name="Harvey R.P."/>
            <person name="Begley C.G."/>
        </authorList>
    </citation>
    <scope>NUCLEOTIDE SEQUENCE [MRNA]</scope>
    <scope>DEVELOPMENTAL STAGE</scope>
    <source>
        <tissue>Embryonic skeletal muscle</tissue>
    </source>
</reference>
<reference key="2">
    <citation type="journal article" date="1999" name="Proc. Natl. Acad. Sci. U.S.A.">
        <title>MyoR: a muscle-restricted basic helix-loop-helix transcription factor that antagonizes the actions of MyoD.</title>
        <authorList>
            <person name="Lu J.-R."/>
            <person name="Webb R."/>
            <person name="Richardson J.A."/>
            <person name="Olson E.N."/>
        </authorList>
    </citation>
    <scope>NUCLEOTIDE SEQUENCE [MRNA]</scope>
    <scope>MUTAGENESIS</scope>
</reference>
<reference key="3">
    <citation type="journal article" date="2004" name="Genome Res.">
        <title>The status, quality, and expansion of the NIH full-length cDNA project: the Mammalian Gene Collection (MGC).</title>
        <authorList>
            <consortium name="The MGC Project Team"/>
        </authorList>
    </citation>
    <scope>NUCLEOTIDE SEQUENCE [LARGE SCALE MRNA]</scope>
</reference>
<dbReference type="EMBL" id="AF087035">
    <property type="protein sequence ID" value="AAC69869.1"/>
    <property type="molecule type" value="mRNA"/>
</dbReference>
<dbReference type="EMBL" id="AF108216">
    <property type="protein sequence ID" value="AAD10053.1"/>
    <property type="molecule type" value="mRNA"/>
</dbReference>
<dbReference type="EMBL" id="BC103592">
    <property type="protein sequence ID" value="AAI03593.1"/>
    <property type="molecule type" value="mRNA"/>
</dbReference>
<dbReference type="EMBL" id="BC103593">
    <property type="protein sequence ID" value="AAI03594.1"/>
    <property type="molecule type" value="mRNA"/>
</dbReference>
<dbReference type="EMBL" id="BC103594">
    <property type="protein sequence ID" value="AAI03595.1"/>
    <property type="molecule type" value="mRNA"/>
</dbReference>
<dbReference type="EMBL" id="BC103623">
    <property type="protein sequence ID" value="AAI03624.1"/>
    <property type="molecule type" value="mRNA"/>
</dbReference>
<dbReference type="CCDS" id="CCDS14825.1"/>
<dbReference type="RefSeq" id="NP_034957.1">
    <property type="nucleotide sequence ID" value="NM_010827.3"/>
</dbReference>
<dbReference type="SMR" id="O88940"/>
<dbReference type="BioGRID" id="201523">
    <property type="interactions" value="1"/>
</dbReference>
<dbReference type="FunCoup" id="O88940">
    <property type="interactions" value="1006"/>
</dbReference>
<dbReference type="STRING" id="10090.ENSMUSP00000027062"/>
<dbReference type="PhosphoSitePlus" id="O88940"/>
<dbReference type="PaxDb" id="10090-ENSMUSP00000027062"/>
<dbReference type="Antibodypedia" id="25121">
    <property type="antibodies" value="238 antibodies from 29 providers"/>
</dbReference>
<dbReference type="DNASU" id="17681"/>
<dbReference type="Ensembl" id="ENSMUST00000027062.7">
    <property type="protein sequence ID" value="ENSMUSP00000027062.6"/>
    <property type="gene ID" value="ENSMUSG00000025930.7"/>
</dbReference>
<dbReference type="GeneID" id="17681"/>
<dbReference type="KEGG" id="mmu:17681"/>
<dbReference type="UCSC" id="uc007aja.2">
    <property type="organism name" value="mouse"/>
</dbReference>
<dbReference type="AGR" id="MGI:1333884"/>
<dbReference type="CTD" id="9242"/>
<dbReference type="MGI" id="MGI:1333884">
    <property type="gene designation" value="Msc"/>
</dbReference>
<dbReference type="VEuPathDB" id="HostDB:ENSMUSG00000025930"/>
<dbReference type="eggNOG" id="KOG4029">
    <property type="taxonomic scope" value="Eukaryota"/>
</dbReference>
<dbReference type="GeneTree" id="ENSGT00940000160438"/>
<dbReference type="HOGENOM" id="CLU_092663_1_0_1"/>
<dbReference type="InParanoid" id="O88940"/>
<dbReference type="OMA" id="AECKQTQ"/>
<dbReference type="OrthoDB" id="6233288at2759"/>
<dbReference type="PhylomeDB" id="O88940"/>
<dbReference type="TreeFam" id="TF350742"/>
<dbReference type="BioGRID-ORCS" id="17681">
    <property type="hits" value="2 hits in 79 CRISPR screens"/>
</dbReference>
<dbReference type="ChiTaRS" id="Msc">
    <property type="organism name" value="mouse"/>
</dbReference>
<dbReference type="PRO" id="PR:O88940"/>
<dbReference type="Proteomes" id="UP000000589">
    <property type="component" value="Chromosome 1"/>
</dbReference>
<dbReference type="RNAct" id="O88940">
    <property type="molecule type" value="protein"/>
</dbReference>
<dbReference type="Bgee" id="ENSMUSG00000025930">
    <property type="expression patterns" value="Expressed in respiratory primordium and 104 other cell types or tissues"/>
</dbReference>
<dbReference type="ExpressionAtlas" id="O88940">
    <property type="expression patterns" value="baseline and differential"/>
</dbReference>
<dbReference type="GO" id="GO:0005654">
    <property type="term" value="C:nucleoplasm"/>
    <property type="evidence" value="ECO:0007669"/>
    <property type="project" value="Ensembl"/>
</dbReference>
<dbReference type="GO" id="GO:0005634">
    <property type="term" value="C:nucleus"/>
    <property type="evidence" value="ECO:0000314"/>
    <property type="project" value="MGI"/>
</dbReference>
<dbReference type="GO" id="GO:0001227">
    <property type="term" value="F:DNA-binding transcription repressor activity, RNA polymerase II-specific"/>
    <property type="evidence" value="ECO:0000314"/>
    <property type="project" value="NTNU_SB"/>
</dbReference>
<dbReference type="GO" id="GO:0046983">
    <property type="term" value="F:protein dimerization activity"/>
    <property type="evidence" value="ECO:0007669"/>
    <property type="project" value="InterPro"/>
</dbReference>
<dbReference type="GO" id="GO:0000978">
    <property type="term" value="F:RNA polymerase II cis-regulatory region sequence-specific DNA binding"/>
    <property type="evidence" value="ECO:0000314"/>
    <property type="project" value="NTNU_SB"/>
</dbReference>
<dbReference type="GO" id="GO:0014707">
    <property type="term" value="P:branchiomeric skeletal muscle development"/>
    <property type="evidence" value="ECO:0000316"/>
    <property type="project" value="UniProtKB"/>
</dbReference>
<dbReference type="GO" id="GO:1990830">
    <property type="term" value="P:cellular response to leukemia inhibitory factor"/>
    <property type="evidence" value="ECO:0000270"/>
    <property type="project" value="MGI"/>
</dbReference>
<dbReference type="GO" id="GO:0060539">
    <property type="term" value="P:diaphragm development"/>
    <property type="evidence" value="ECO:0000316"/>
    <property type="project" value="UniProtKB"/>
</dbReference>
<dbReference type="GO" id="GO:0000122">
    <property type="term" value="P:negative regulation of transcription by RNA polymerase II"/>
    <property type="evidence" value="ECO:0000314"/>
    <property type="project" value="NTNU_SB"/>
</dbReference>
<dbReference type="GO" id="GO:0060021">
    <property type="term" value="P:roof of mouth development"/>
    <property type="evidence" value="ECO:0000316"/>
    <property type="project" value="UniProtKB"/>
</dbReference>
<dbReference type="CDD" id="cd19703">
    <property type="entry name" value="bHLH_TS_musculin"/>
    <property type="match status" value="1"/>
</dbReference>
<dbReference type="FunFam" id="4.10.280.10:FF:000010">
    <property type="entry name" value="Scleraxis bHLH transcription factor"/>
    <property type="match status" value="1"/>
</dbReference>
<dbReference type="Gene3D" id="4.10.280.10">
    <property type="entry name" value="Helix-loop-helix DNA-binding domain"/>
    <property type="match status" value="1"/>
</dbReference>
<dbReference type="InterPro" id="IPR011598">
    <property type="entry name" value="bHLH_dom"/>
</dbReference>
<dbReference type="InterPro" id="IPR050283">
    <property type="entry name" value="E-box_TF_Regulators"/>
</dbReference>
<dbReference type="InterPro" id="IPR036638">
    <property type="entry name" value="HLH_DNA-bd_sf"/>
</dbReference>
<dbReference type="PANTHER" id="PTHR23349">
    <property type="entry name" value="BASIC HELIX-LOOP-HELIX TRANSCRIPTION FACTOR, TWIST"/>
    <property type="match status" value="1"/>
</dbReference>
<dbReference type="PANTHER" id="PTHR23349:SF62">
    <property type="entry name" value="MUSCULIN"/>
    <property type="match status" value="1"/>
</dbReference>
<dbReference type="Pfam" id="PF00010">
    <property type="entry name" value="HLH"/>
    <property type="match status" value="1"/>
</dbReference>
<dbReference type="SMART" id="SM00353">
    <property type="entry name" value="HLH"/>
    <property type="match status" value="1"/>
</dbReference>
<dbReference type="SUPFAM" id="SSF47459">
    <property type="entry name" value="HLH, helix-loop-helix DNA-binding domain"/>
    <property type="match status" value="1"/>
</dbReference>
<dbReference type="PROSITE" id="PS50888">
    <property type="entry name" value="BHLH"/>
    <property type="match status" value="1"/>
</dbReference>
<name>MUSC_MOUSE</name>
<organism>
    <name type="scientific">Mus musculus</name>
    <name type="common">Mouse</name>
    <dbReference type="NCBI Taxonomy" id="10090"/>
    <lineage>
        <taxon>Eukaryota</taxon>
        <taxon>Metazoa</taxon>
        <taxon>Chordata</taxon>
        <taxon>Craniata</taxon>
        <taxon>Vertebrata</taxon>
        <taxon>Euteleostomi</taxon>
        <taxon>Mammalia</taxon>
        <taxon>Eutheria</taxon>
        <taxon>Euarchontoglires</taxon>
        <taxon>Glires</taxon>
        <taxon>Rodentia</taxon>
        <taxon>Myomorpha</taxon>
        <taxon>Muroidea</taxon>
        <taxon>Muridae</taxon>
        <taxon>Murinae</taxon>
        <taxon>Mus</taxon>
        <taxon>Mus</taxon>
    </lineage>
</organism>